<protein>
    <recommendedName>
        <fullName evidence="1">Protein TusB</fullName>
    </recommendedName>
    <alternativeName>
        <fullName evidence="1">tRNA 2-thiouridine synthesizing protein B</fullName>
    </alternativeName>
</protein>
<dbReference type="EMBL" id="CP001063">
    <property type="protein sequence ID" value="ACD08998.1"/>
    <property type="molecule type" value="Genomic_DNA"/>
</dbReference>
<dbReference type="RefSeq" id="WP_000903377.1">
    <property type="nucleotide sequence ID" value="NC_010658.1"/>
</dbReference>
<dbReference type="SMR" id="B2U2V0"/>
<dbReference type="STRING" id="344609.SbBS512_E3717"/>
<dbReference type="GeneID" id="75206286"/>
<dbReference type="KEGG" id="sbc:SbBS512_E3717"/>
<dbReference type="HOGENOM" id="CLU_166087_2_1_6"/>
<dbReference type="Proteomes" id="UP000001030">
    <property type="component" value="Chromosome"/>
</dbReference>
<dbReference type="GO" id="GO:1990228">
    <property type="term" value="C:sulfurtransferase complex"/>
    <property type="evidence" value="ECO:0007669"/>
    <property type="project" value="TreeGrafter"/>
</dbReference>
<dbReference type="GO" id="GO:0002143">
    <property type="term" value="P:tRNA wobble position uridine thiolation"/>
    <property type="evidence" value="ECO:0007669"/>
    <property type="project" value="InterPro"/>
</dbReference>
<dbReference type="FunFam" id="3.40.1260.10:FF:000002">
    <property type="entry name" value="Sulfurtransferase TusB"/>
    <property type="match status" value="1"/>
</dbReference>
<dbReference type="Gene3D" id="3.40.1260.10">
    <property type="entry name" value="DsrEFH-like"/>
    <property type="match status" value="1"/>
</dbReference>
<dbReference type="HAMAP" id="MF_01564">
    <property type="entry name" value="Thiourid_synth_B"/>
    <property type="match status" value="1"/>
</dbReference>
<dbReference type="InterPro" id="IPR027396">
    <property type="entry name" value="DsrEFH-like"/>
</dbReference>
<dbReference type="InterPro" id="IPR023526">
    <property type="entry name" value="Sulphur_relay_TusB"/>
</dbReference>
<dbReference type="InterPro" id="IPR007215">
    <property type="entry name" value="Sulphur_relay_TusB/DsrH"/>
</dbReference>
<dbReference type="NCBIfam" id="NF010035">
    <property type="entry name" value="PRK13510.1"/>
    <property type="match status" value="1"/>
</dbReference>
<dbReference type="NCBIfam" id="TIGR03011">
    <property type="entry name" value="sulf_tusB_dsrH"/>
    <property type="match status" value="1"/>
</dbReference>
<dbReference type="PANTHER" id="PTHR37526">
    <property type="entry name" value="PROTEIN TUSB"/>
    <property type="match status" value="1"/>
</dbReference>
<dbReference type="PANTHER" id="PTHR37526:SF1">
    <property type="entry name" value="PROTEIN TUSB"/>
    <property type="match status" value="1"/>
</dbReference>
<dbReference type="Pfam" id="PF04077">
    <property type="entry name" value="DsrH"/>
    <property type="match status" value="1"/>
</dbReference>
<dbReference type="SUPFAM" id="SSF75169">
    <property type="entry name" value="DsrEFH-like"/>
    <property type="match status" value="1"/>
</dbReference>
<accession>B2U2V0</accession>
<sequence length="95" mass="10692">MLHTLHRSPWLTDFAALLRLLSEGDELLLLQDGVTAAVDGNRYLESLRNAPIKVYALNEDLIARGLTGQISNDIIPIDYTDFVRLTVKHSSQMAW</sequence>
<evidence type="ECO:0000255" key="1">
    <source>
        <dbReference type="HAMAP-Rule" id="MF_01564"/>
    </source>
</evidence>
<gene>
    <name evidence="1" type="primary">tusB</name>
    <name type="ordered locus">SbBS512_E3717</name>
</gene>
<feature type="chain" id="PRO_1000147194" description="Protein TusB">
    <location>
        <begin position="1"/>
        <end position="95"/>
    </location>
</feature>
<organism>
    <name type="scientific">Shigella boydii serotype 18 (strain CDC 3083-94 / BS512)</name>
    <dbReference type="NCBI Taxonomy" id="344609"/>
    <lineage>
        <taxon>Bacteria</taxon>
        <taxon>Pseudomonadati</taxon>
        <taxon>Pseudomonadota</taxon>
        <taxon>Gammaproteobacteria</taxon>
        <taxon>Enterobacterales</taxon>
        <taxon>Enterobacteriaceae</taxon>
        <taxon>Shigella</taxon>
    </lineage>
</organism>
<comment type="function">
    <text evidence="1">Part of a sulfur-relay system required for 2-thiolation of 5-methylaminomethyl-2-thiouridine (mnm(5)s(2)U) at tRNA wobble positions.</text>
</comment>
<comment type="subunit">
    <text evidence="1">Heterohexamer, formed by a dimer of trimers. The hexameric TusBCD complex contains 2 copies each of TusB, TusC and TusD. The TusBCD complex interacts with TusE.</text>
</comment>
<comment type="subcellular location">
    <subcellularLocation>
        <location evidence="1">Cytoplasm</location>
    </subcellularLocation>
</comment>
<comment type="similarity">
    <text evidence="1">Belongs to the DsrH/TusB family.</text>
</comment>
<reference key="1">
    <citation type="submission" date="2008-05" db="EMBL/GenBank/DDBJ databases">
        <title>Complete sequence of Shigella boydii serotype 18 strain BS512.</title>
        <authorList>
            <person name="Rasko D.A."/>
            <person name="Rosovitz M."/>
            <person name="Maurelli A.T."/>
            <person name="Myers G."/>
            <person name="Seshadri R."/>
            <person name="Cer R."/>
            <person name="Jiang L."/>
            <person name="Ravel J."/>
            <person name="Sebastian Y."/>
        </authorList>
    </citation>
    <scope>NUCLEOTIDE SEQUENCE [LARGE SCALE GENOMIC DNA]</scope>
    <source>
        <strain>CDC 3083-94 / BS512</strain>
    </source>
</reference>
<keyword id="KW-0963">Cytoplasm</keyword>
<keyword id="KW-1185">Reference proteome</keyword>
<keyword id="KW-0819">tRNA processing</keyword>
<name>TUSB_SHIB3</name>
<proteinExistence type="inferred from homology"/>